<reference key="1">
    <citation type="journal article" date="2003" name="Plant Cell">
        <title>Biosynthesis and emission of terpenoid volatiles from Arabidopsis flowers.</title>
        <authorList>
            <person name="Chen F."/>
            <person name="Tholl D."/>
            <person name="D'Auria J.C."/>
            <person name="Farooq A."/>
            <person name="Pichersky E."/>
            <person name="Gershenzon J."/>
        </authorList>
    </citation>
    <scope>NUCLEOTIDE SEQUENCE [MRNA]</scope>
    <scope>TISSUE SPECIFICITY</scope>
    <source>
        <strain>cv. Landsberg erecta</strain>
    </source>
</reference>
<reference key="2">
    <citation type="journal article" date="2000" name="Nature">
        <title>Sequence and analysis of chromosome 1 of the plant Arabidopsis thaliana.</title>
        <authorList>
            <person name="Theologis A."/>
            <person name="Ecker J.R."/>
            <person name="Palm C.J."/>
            <person name="Federspiel N.A."/>
            <person name="Kaul S."/>
            <person name="White O."/>
            <person name="Alonso J."/>
            <person name="Altafi H."/>
            <person name="Araujo R."/>
            <person name="Bowman C.L."/>
            <person name="Brooks S.Y."/>
            <person name="Buehler E."/>
            <person name="Chan A."/>
            <person name="Chao Q."/>
            <person name="Chen H."/>
            <person name="Cheuk R.F."/>
            <person name="Chin C.W."/>
            <person name="Chung M.K."/>
            <person name="Conn L."/>
            <person name="Conway A.B."/>
            <person name="Conway A.R."/>
            <person name="Creasy T.H."/>
            <person name="Dewar K."/>
            <person name="Dunn P."/>
            <person name="Etgu P."/>
            <person name="Feldblyum T.V."/>
            <person name="Feng J.-D."/>
            <person name="Fong B."/>
            <person name="Fujii C.Y."/>
            <person name="Gill J.E."/>
            <person name="Goldsmith A.D."/>
            <person name="Haas B."/>
            <person name="Hansen N.F."/>
            <person name="Hughes B."/>
            <person name="Huizar L."/>
            <person name="Hunter J.L."/>
            <person name="Jenkins J."/>
            <person name="Johnson-Hopson C."/>
            <person name="Khan S."/>
            <person name="Khaykin E."/>
            <person name="Kim C.J."/>
            <person name="Koo H.L."/>
            <person name="Kremenetskaia I."/>
            <person name="Kurtz D.B."/>
            <person name="Kwan A."/>
            <person name="Lam B."/>
            <person name="Langin-Hooper S."/>
            <person name="Lee A."/>
            <person name="Lee J.M."/>
            <person name="Lenz C.A."/>
            <person name="Li J.H."/>
            <person name="Li Y.-P."/>
            <person name="Lin X."/>
            <person name="Liu S.X."/>
            <person name="Liu Z.A."/>
            <person name="Luros J.S."/>
            <person name="Maiti R."/>
            <person name="Marziali A."/>
            <person name="Militscher J."/>
            <person name="Miranda M."/>
            <person name="Nguyen M."/>
            <person name="Nierman W.C."/>
            <person name="Osborne B.I."/>
            <person name="Pai G."/>
            <person name="Peterson J."/>
            <person name="Pham P.K."/>
            <person name="Rizzo M."/>
            <person name="Rooney T."/>
            <person name="Rowley D."/>
            <person name="Sakano H."/>
            <person name="Salzberg S.L."/>
            <person name="Schwartz J.R."/>
            <person name="Shinn P."/>
            <person name="Southwick A.M."/>
            <person name="Sun H."/>
            <person name="Tallon L.J."/>
            <person name="Tambunga G."/>
            <person name="Toriumi M.J."/>
            <person name="Town C.D."/>
            <person name="Utterback T."/>
            <person name="Van Aken S."/>
            <person name="Vaysberg M."/>
            <person name="Vysotskaia V.S."/>
            <person name="Walker M."/>
            <person name="Wu D."/>
            <person name="Yu G."/>
            <person name="Fraser C.M."/>
            <person name="Venter J.C."/>
            <person name="Davis R.W."/>
        </authorList>
    </citation>
    <scope>NUCLEOTIDE SEQUENCE [LARGE SCALE GENOMIC DNA]</scope>
    <source>
        <strain>cv. Columbia</strain>
    </source>
</reference>
<reference key="3">
    <citation type="journal article" date="2017" name="Plant J.">
        <title>Araport11: a complete reannotation of the Arabidopsis thaliana reference genome.</title>
        <authorList>
            <person name="Cheng C.Y."/>
            <person name="Krishnakumar V."/>
            <person name="Chan A.P."/>
            <person name="Thibaud-Nissen F."/>
            <person name="Schobel S."/>
            <person name="Town C.D."/>
        </authorList>
    </citation>
    <scope>GENOME REANNOTATION</scope>
    <source>
        <strain>cv. Columbia</strain>
    </source>
</reference>
<reference key="4">
    <citation type="journal article" date="2003" name="Science">
        <title>Empirical analysis of transcriptional activity in the Arabidopsis genome.</title>
        <authorList>
            <person name="Yamada K."/>
            <person name="Lim J."/>
            <person name="Dale J.M."/>
            <person name="Chen H."/>
            <person name="Shinn P."/>
            <person name="Palm C.J."/>
            <person name="Southwick A.M."/>
            <person name="Wu H.C."/>
            <person name="Kim C.J."/>
            <person name="Nguyen M."/>
            <person name="Pham P.K."/>
            <person name="Cheuk R.F."/>
            <person name="Karlin-Newmann G."/>
            <person name="Liu S.X."/>
            <person name="Lam B."/>
            <person name="Sakano H."/>
            <person name="Wu T."/>
            <person name="Yu G."/>
            <person name="Miranda M."/>
            <person name="Quach H.L."/>
            <person name="Tripp M."/>
            <person name="Chang C.H."/>
            <person name="Lee J.M."/>
            <person name="Toriumi M.J."/>
            <person name="Chan M.M."/>
            <person name="Tang C.C."/>
            <person name="Onodera C.S."/>
            <person name="Deng J.M."/>
            <person name="Akiyama K."/>
            <person name="Ansari Y."/>
            <person name="Arakawa T."/>
            <person name="Banh J."/>
            <person name="Banno F."/>
            <person name="Bowser L."/>
            <person name="Brooks S.Y."/>
            <person name="Carninci P."/>
            <person name="Chao Q."/>
            <person name="Choy N."/>
            <person name="Enju A."/>
            <person name="Goldsmith A.D."/>
            <person name="Gurjal M."/>
            <person name="Hansen N.F."/>
            <person name="Hayashizaki Y."/>
            <person name="Johnson-Hopson C."/>
            <person name="Hsuan V.W."/>
            <person name="Iida K."/>
            <person name="Karnes M."/>
            <person name="Khan S."/>
            <person name="Koesema E."/>
            <person name="Ishida J."/>
            <person name="Jiang P.X."/>
            <person name="Jones T."/>
            <person name="Kawai J."/>
            <person name="Kamiya A."/>
            <person name="Meyers C."/>
            <person name="Nakajima M."/>
            <person name="Narusaka M."/>
            <person name="Seki M."/>
            <person name="Sakurai T."/>
            <person name="Satou M."/>
            <person name="Tamse R."/>
            <person name="Vaysberg M."/>
            <person name="Wallender E.K."/>
            <person name="Wong C."/>
            <person name="Yamamura Y."/>
            <person name="Yuan S."/>
            <person name="Shinozaki K."/>
            <person name="Davis R.W."/>
            <person name="Theologis A."/>
            <person name="Ecker J.R."/>
        </authorList>
    </citation>
    <scope>NUCLEOTIDE SEQUENCE [LARGE SCALE MRNA]</scope>
    <source>
        <strain>cv. Columbia</strain>
    </source>
</reference>
<reference key="5">
    <citation type="journal article" date="1998" name="Mol. Biol. Evol.">
        <title>Structure and evolution of linalool synthase.</title>
        <authorList>
            <person name="Cseke L."/>
            <person name="Dudareva N."/>
            <person name="Pichersky E."/>
        </authorList>
    </citation>
    <scope>IDENTIFICATION</scope>
</reference>
<reference key="6">
    <citation type="journal article" date="2002" name="Mol. Genet. Genomics">
        <title>Genomic analysis of the terpenoid synthase (AtTPS) gene family of Arabidopsis thaliana.</title>
        <authorList>
            <person name="Aubourg S."/>
            <person name="Lecharny A."/>
            <person name="Bohlmann J."/>
        </authorList>
    </citation>
    <scope>GENE FAMILY</scope>
    <scope>NOMENCLATURE</scope>
</reference>
<reference key="7">
    <citation type="journal article" date="2003" name="Plant Mol. Biol.">
        <title>Genome organization in Arabidopsis thaliana: a survey for genes involved in isoprenoid and chlorophyll metabolism.</title>
        <authorList>
            <person name="Lange B.M."/>
            <person name="Ghassemian M."/>
        </authorList>
    </citation>
    <scope>GENE FAMILY</scope>
</reference>
<reference key="8">
    <citation type="journal article" date="2005" name="Plant Mol. Biol.">
        <title>Expression profiling reveals COI1 to be a key regulator of genes involved in wound- and methyl jasmonate-induced secondary metabolism, defence, and hormone interactions.</title>
        <authorList>
            <person name="Devoto A."/>
            <person name="Ellis C."/>
            <person name="Magusin A."/>
            <person name="Chang H.-S."/>
            <person name="Chilcott C."/>
            <person name="Zhu T."/>
            <person name="Turner J.G."/>
        </authorList>
    </citation>
    <scope>INDUCTION BY METHYL JASMONATE</scope>
</reference>
<reference key="9">
    <citation type="journal article" date="2008" name="BMC Genomics">
        <title>Comparative transcriptome analysis of Arabidopsis thaliana infested by diamond back moth (Plutella xylostella) larvae reveals signatures of stress response, secondary metabolism, and signalling.</title>
        <authorList>
            <person name="Ehlting J."/>
            <person name="Chowrira S.G."/>
            <person name="Mattheus N."/>
            <person name="Aeschliman D.S."/>
            <person name="Arimura G."/>
            <person name="Bohlmann J."/>
        </authorList>
    </citation>
    <scope>INDUCTION BY HERBIVORY</scope>
</reference>
<reference key="10">
    <citation type="journal article" date="2008" name="Mol. Plant Microbe Interact.">
        <title>Pseudomonas syringae elicits emission of the terpenoid (E,E)-4,8,12-trimethyl-1,3,7,11-tridecatetraene in Arabidopsis leaves via jasmonate signaling and expression of the terpene synthase TPS4.</title>
        <authorList>
            <person name="Attaran E."/>
            <person name="Rostas M."/>
            <person name="Zeier J."/>
        </authorList>
    </citation>
    <scope>FUNCTION</scope>
    <scope>CATALYTIC ACTIVITY</scope>
    <scope>DISRUPTION PHENOTYPE</scope>
    <scope>INDUCTION</scope>
    <scope>PATHWAY</scope>
</reference>
<reference key="11">
    <citation type="journal article" date="2008" name="Plant Cell">
        <title>Identification and regulation of TPS04/GES, an Arabidopsis geranyllinalool synthase catalyzing the first step in the formation of the insect-induced volatile C16-homoterpene TMTT.</title>
        <authorList>
            <person name="Herde M."/>
            <person name="Gaertner K."/>
            <person name="Koellner T.G."/>
            <person name="Fode B."/>
            <person name="Boland W."/>
            <person name="Gershenzon J."/>
            <person name="Gatz C."/>
            <person name="Tholl D."/>
        </authorList>
    </citation>
    <scope>FUNCTION</scope>
    <scope>CATALYTIC ACTIVITY</scope>
    <scope>INDUCTION</scope>
    <scope>DISRUPTION PHENOTYPE</scope>
    <scope>SUBCELLULAR LOCATION</scope>
    <scope>TISSUE SPECIFICITY</scope>
    <scope>PATHWAY</scope>
</reference>
<reference key="12">
    <citation type="journal article" date="2010" name="Proc. Natl. Acad. Sci. U.S.A.">
        <title>Herbivore-induced and floral homoterpene volatiles are biosynthesized by a single P450 enzyme (CYP82G1) in Arabidopsis.</title>
        <authorList>
            <person name="Lee S."/>
            <person name="Badieyan S."/>
            <person name="Bevan D.R."/>
            <person name="Herde M."/>
            <person name="Gatz C."/>
            <person name="Tholl D."/>
        </authorList>
    </citation>
    <scope>INDUCTION BY ALAMETHICIN</scope>
</reference>
<reference key="13">
    <citation type="journal article" date="2011" name="Phytochemistry">
        <title>The biochemistry of homoterpenes--common constituents of floral and herbivore-induced plant volatile bouquets.</title>
        <authorList>
            <person name="Tholl D."/>
            <person name="Sohrabi R."/>
            <person name="Huh J.-H."/>
            <person name="Lee S."/>
        </authorList>
    </citation>
    <scope>REVIEW</scope>
</reference>
<organism>
    <name type="scientific">Arabidopsis thaliana</name>
    <name type="common">Mouse-ear cress</name>
    <dbReference type="NCBI Taxonomy" id="3702"/>
    <lineage>
        <taxon>Eukaryota</taxon>
        <taxon>Viridiplantae</taxon>
        <taxon>Streptophyta</taxon>
        <taxon>Embryophyta</taxon>
        <taxon>Tracheophyta</taxon>
        <taxon>Spermatophyta</taxon>
        <taxon>Magnoliopsida</taxon>
        <taxon>eudicotyledons</taxon>
        <taxon>Gunneridae</taxon>
        <taxon>Pentapetalae</taxon>
        <taxon>rosids</taxon>
        <taxon>malvids</taxon>
        <taxon>Brassicales</taxon>
        <taxon>Brassicaceae</taxon>
        <taxon>Camelineae</taxon>
        <taxon>Arabidopsis</taxon>
    </lineage>
</organism>
<comment type="function">
    <text evidence="5 7 14">Involved in the biosynthesis of homoterpenes, attractants of herbivores parasitoids and predators (e.g. predatory mites and parasitoid wasps) (PubMed:21334702). Involved in diterpene (C20) biosynthesis (PubMed:18398052, PubMed:18842097). Catalyzes the conversion of geranylgeranyl diphosphate to (E,E)-geranyllinalool, the precursor of the insect-induced volatile C16-homoterpene TMTT (PubMed:18398052, PubMed:18842097).</text>
</comment>
<comment type="catalytic activity">
    <reaction evidence="5 7">
        <text>(2E,6E,10E)-geranylgeranyl diphosphate + H2O = (6E,10E)-geranyllinalool + diphosphate</text>
        <dbReference type="Rhea" id="RHEA:38155"/>
        <dbReference type="ChEBI" id="CHEBI:15377"/>
        <dbReference type="ChEBI" id="CHEBI:33019"/>
        <dbReference type="ChEBI" id="CHEBI:58756"/>
        <dbReference type="ChEBI" id="CHEBI:74299"/>
        <dbReference type="EC" id="4.2.3.144"/>
    </reaction>
</comment>
<comment type="cofactor">
    <cofactor evidence="1">
        <name>Mg(2+)</name>
        <dbReference type="ChEBI" id="CHEBI:18420"/>
    </cofactor>
    <cofactor evidence="1">
        <name>Mn(2+)</name>
        <dbReference type="ChEBI" id="CHEBI:29035"/>
    </cofactor>
    <text evidence="1">Binds 3 Mg(2+) or Mn(2+) ions per subunit.</text>
</comment>
<comment type="pathway">
    <text evidence="5 7">Secondary metabolite biosynthesis; terpenoid biosynthesis.</text>
</comment>
<comment type="subcellular location">
    <subcellularLocation>
        <location evidence="5">Cytoplasm</location>
    </subcellularLocation>
</comment>
<comment type="tissue specificity">
    <text evidence="3 5">Expressed in leaves and flowers.</text>
</comment>
<comment type="induction">
    <text evidence="4 5 6 7 8">By methyl jasmonate, coronalon, alamethicin and in response to the caterpillar P.xylostella feeding. Induced by infection of avirulent and virulent bacterial pathogen P.syringae.</text>
</comment>
<comment type="domain">
    <text evidence="15">The Asp-Asp-Xaa-Xaa-Asp/Glu (DDXXD/E) motif is important for the catalytic activity, presumably through binding to Mg(2+).</text>
</comment>
<comment type="disruption phenotype">
    <text evidence="5 7">No formation of (E,E)-geranyllinalool and TMMTT detected.</text>
</comment>
<comment type="similarity">
    <text evidence="15">Belongs to the terpene synthase family. Tpsf subfamily.</text>
</comment>
<comment type="sequence caution" evidence="15">
    <conflict type="erroneous gene model prediction">
        <sequence resource="EMBL-CDS" id="AAB71482"/>
    </conflict>
</comment>
<keyword id="KW-0963">Cytoplasm</keyword>
<keyword id="KW-0456">Lyase</keyword>
<keyword id="KW-0460">Magnesium</keyword>
<keyword id="KW-0464">Manganese</keyword>
<keyword id="KW-0479">Metal-binding</keyword>
<keyword id="KW-1185">Reference proteome</keyword>
<sequence length="877" mass="101895">MKSSYGSSSNDLHAFVNEIKGEIQLSNINLDPYSFVSPSAYDTAWLSMIEEDINVDDNELKPMFQGCLDWIMCNQNAREGFWMNSTSYTTVADGRDEDGEKDMCILTSTLACVVALQKWNIGCFHLHKGTRYIERNTEMIIGKYINEEGSYPRWFAIKFTGILELAQKLGLHFVFSSRCIEMIKGMFYQRQEIIQREKLVHDCNYKPLLAYLEVLPSKLYVTNQEDIIVKSLDSMDGSLFQSPSATASAFMLTRNTKCLAYLQNLVQKCPNGVPQKYPLNEDLIKLSMVNLIESTGLGEFFGIEIEHVLEQVYSRYEEKDFERMPMSYLADQLHKDSLAFRMLRMHGRDVSPRSFCWFLNDQETRNHLERNIDSFLLVILSVYRATDLMFPGEHDLQEAREYTRNLLEKRRSIKEKMIMHELSTPWIARLKHLDHRMWIEDKNSNVLSMEKASFLRLHSSYSDKLTHLAARNFEFQQAKYCRELEELTMWVKKWGLSDIGFGREKTTYCYFATVTSLPYEYAIKFGKLAAKTAILITIADDFFDEKGSFNDLEGLTKAVLRWEGEELKSYGNIIFRALDDIVRETANTCRTHHKTDIIVHLRNIWGETFESWLREAEWSKKGHTSSMDEYIRNGMISIAAHTIALSISCLMEPCFPHNKLKPGNYDSITTLLMIIPRLLNDLQSYQKEQEQGKMNSVLLHMKNHPGLEIEDSIAHIEKIIDSKRKEFLEHVLVDGLSDLPKPCKEIHMSCCKVFEMFFNKKNRYDSNTEMLHDIKKALYDPINVYELSEMEPMPLMAHGDEYMILPLLLNSLPNILEFKRKDGYGAMKTSMCFGRSYRVNKRVMASQLDDQHKPLKIVASQRKPVPMMQSIFAPCFY</sequence>
<evidence type="ECO:0000250" key="1">
    <source>
        <dbReference type="UniProtKB" id="A0A1C9J6A7"/>
    </source>
</evidence>
<evidence type="ECO:0000250" key="2">
    <source>
        <dbReference type="UniProtKB" id="Q40577"/>
    </source>
</evidence>
<evidence type="ECO:0000269" key="3">
    <source>
    </source>
</evidence>
<evidence type="ECO:0000269" key="4">
    <source>
    </source>
</evidence>
<evidence type="ECO:0000269" key="5">
    <source>
    </source>
</evidence>
<evidence type="ECO:0000269" key="6">
    <source>
    </source>
</evidence>
<evidence type="ECO:0000269" key="7">
    <source>
    </source>
</evidence>
<evidence type="ECO:0000269" key="8">
    <source>
    </source>
</evidence>
<evidence type="ECO:0000303" key="9">
    <source>
    </source>
</evidence>
<evidence type="ECO:0000303" key="10">
    <source>
    </source>
</evidence>
<evidence type="ECO:0000303" key="11">
    <source>
    </source>
</evidence>
<evidence type="ECO:0000303" key="12">
    <source>
    </source>
</evidence>
<evidence type="ECO:0000303" key="13">
    <source>
    </source>
</evidence>
<evidence type="ECO:0000303" key="14">
    <source>
    </source>
</evidence>
<evidence type="ECO:0000305" key="15"/>
<evidence type="ECO:0000312" key="16">
    <source>
        <dbReference type="Araport" id="AT1G61120"/>
    </source>
</evidence>
<evidence type="ECO:0000312" key="17">
    <source>
        <dbReference type="EMBL" id="AAB71482.1"/>
    </source>
</evidence>
<proteinExistence type="evidence at protein level"/>
<gene>
    <name evidence="11" type="primary">GES</name>
    <name evidence="10" type="synonym">LIS</name>
    <name evidence="9 12" type="synonym">TPS04</name>
    <name evidence="13" type="synonym">TPS4</name>
    <name evidence="16" type="ordered locus">At1g61120</name>
    <name evidence="17" type="ORF">F11P17.15</name>
</gene>
<protein>
    <recommendedName>
        <fullName evidence="10 11">(E,E)-geranyllinalool synthase</fullName>
        <shortName evidence="14">AtGES</shortName>
        <ecNumber evidence="5 7">4.2.3.144</ecNumber>
    </recommendedName>
    <alternativeName>
        <fullName evidence="9 12 13">Terpenoid synthase 4</fullName>
        <shortName evidence="9 12">AtTPS04</shortName>
    </alternativeName>
</protein>
<accession>Q93YV0</accession>
<accession>O22733</accession>
<accession>Q84UU3</accession>
<name>GES_ARATH</name>
<feature type="chain" id="PRO_0000403700" description="(E,E)-geranyllinalool synthase">
    <location>
        <begin position="1"/>
        <end position="877"/>
    </location>
</feature>
<feature type="short sequence motif" description="DDXXD motif" evidence="15">
    <location>
        <begin position="540"/>
        <end position="544"/>
    </location>
</feature>
<feature type="binding site" evidence="2">
    <location>
        <position position="540"/>
    </location>
    <ligand>
        <name>Mg(2+)</name>
        <dbReference type="ChEBI" id="CHEBI:18420"/>
        <label>1</label>
    </ligand>
</feature>
<feature type="binding site" evidence="2">
    <location>
        <position position="540"/>
    </location>
    <ligand>
        <name>Mg(2+)</name>
        <dbReference type="ChEBI" id="CHEBI:18420"/>
        <label>2</label>
    </ligand>
</feature>
<feature type="binding site" evidence="1">
    <location>
        <position position="540"/>
    </location>
    <ligand>
        <name>substrate</name>
    </ligand>
</feature>
<feature type="binding site" evidence="2">
    <location>
        <position position="544"/>
    </location>
    <ligand>
        <name>Mg(2+)</name>
        <dbReference type="ChEBI" id="CHEBI:18420"/>
        <label>1</label>
    </ligand>
</feature>
<feature type="binding site" evidence="2">
    <location>
        <position position="544"/>
    </location>
    <ligand>
        <name>Mg(2+)</name>
        <dbReference type="ChEBI" id="CHEBI:18420"/>
        <label>2</label>
    </ligand>
</feature>
<feature type="binding site" evidence="1">
    <location>
        <position position="544"/>
    </location>
    <ligand>
        <name>substrate</name>
    </ligand>
</feature>
<feature type="binding site" evidence="1">
    <location>
        <position position="677"/>
    </location>
    <ligand>
        <name>substrate</name>
    </ligand>
</feature>
<feature type="binding site" evidence="2">
    <location>
        <position position="680"/>
    </location>
    <ligand>
        <name>Mg(2+)</name>
        <dbReference type="ChEBI" id="CHEBI:18420"/>
        <label>3</label>
    </ligand>
</feature>
<feature type="binding site" evidence="1">
    <location>
        <position position="680"/>
    </location>
    <ligand>
        <name>substrate</name>
    </ligand>
</feature>
<feature type="binding site" evidence="2">
    <location>
        <position position="684"/>
    </location>
    <ligand>
        <name>Mg(2+)</name>
        <dbReference type="ChEBI" id="CHEBI:18420"/>
        <label>3</label>
    </ligand>
</feature>
<feature type="binding site" evidence="2">
    <location>
        <position position="688"/>
    </location>
    <ligand>
        <name>Mg(2+)</name>
        <dbReference type="ChEBI" id="CHEBI:18420"/>
        <label>3</label>
    </ligand>
</feature>
<feature type="sequence conflict" description="In Ref. 1; AAO85540." evidence="15" ref="1">
    <original>A</original>
    <variation>T</variation>
    <location>
        <position position="14"/>
    </location>
</feature>
<feature type="sequence conflict" description="In Ref. 1; AAO85540." evidence="15" ref="1">
    <original>G</original>
    <variation>R</variation>
    <location>
        <position position="21"/>
    </location>
</feature>
<feature type="sequence conflict" description="In Ref. 1; AAO85540." evidence="15" ref="1">
    <original>E</original>
    <variation>Q</variation>
    <location>
        <position position="51"/>
    </location>
</feature>
<feature type="sequence conflict" description="In Ref. 1; AAO85540." evidence="15" ref="1">
    <original>Y</original>
    <variation>YT</variation>
    <location>
        <position position="88"/>
    </location>
</feature>
<feature type="sequence conflict" description="In Ref. 1; AAO85540." evidence="15" ref="1">
    <original>R</original>
    <variation>G</variation>
    <location>
        <position position="95"/>
    </location>
</feature>
<feature type="sequence conflict" description="In Ref. 1; AAO85540." evidence="15" ref="1">
    <original>KDMCILT</original>
    <variation>EDMYILI</variation>
    <location>
        <begin position="101"/>
        <end position="107"/>
    </location>
</feature>
<feature type="sequence conflict" description="In Ref. 1; AAO85540." evidence="15" ref="1">
    <original>I</original>
    <variation>A</variation>
    <location>
        <position position="145"/>
    </location>
</feature>
<feature type="sequence conflict" description="In Ref. 1; AAO85540." evidence="15" ref="1">
    <original>A</original>
    <variation>V</variation>
    <location>
        <position position="156"/>
    </location>
</feature>
<feature type="sequence conflict" description="In Ref. 1; AAO85540." evidence="15" ref="1">
    <original>Q</original>
    <variation>E</variation>
    <location>
        <position position="195"/>
    </location>
</feature>
<feature type="sequence conflict" description="In Ref. 1; AAO85540." evidence="15" ref="1">
    <original>H</original>
    <variation>D</variation>
    <location>
        <position position="201"/>
    </location>
</feature>
<feature type="sequence conflict" description="In Ref. 1; AAO85540." evidence="15" ref="1">
    <original>K</original>
    <variation>I</variation>
    <location>
        <position position="206"/>
    </location>
</feature>
<feature type="sequence conflict" description="In Ref. 1; AAO85540." evidence="15" ref="1">
    <original>D</original>
    <variation>N</variation>
    <location>
        <position position="236"/>
    </location>
</feature>
<feature type="sequence conflict" description="In Ref. 1; AAO85540." evidence="15" ref="1">
    <original>F</original>
    <variation>L</variation>
    <location>
        <position position="300"/>
    </location>
</feature>
<feature type="sequence conflict" description="In Ref. 1; AAO85540." evidence="15" ref="1">
    <original>S</original>
    <variation>R</variation>
    <location>
        <position position="314"/>
    </location>
</feature>
<feature type="sequence conflict" description="In Ref. 1; AAO85540." evidence="15" ref="1">
    <original>E</original>
    <variation>K</variation>
    <location>
        <position position="363"/>
    </location>
</feature>
<feature type="sequence conflict" description="In Ref. 1; AAO85540." evidence="15" ref="1">
    <original>S</original>
    <variation>C</variation>
    <location>
        <position position="374"/>
    </location>
</feature>
<feature type="sequence conflict" description="In Ref. 1; AAO85540." evidence="15" ref="1">
    <original>L</original>
    <variation>P</variation>
    <location>
        <position position="388"/>
    </location>
</feature>
<feature type="sequence conflict" description="In Ref. 1; AAO85540." evidence="15" ref="1">
    <original>QEARE</original>
    <variation>EEARK</variation>
    <location>
        <begin position="397"/>
        <end position="401"/>
    </location>
</feature>
<feature type="sequence conflict" description="In Ref. 1; AAO85540." evidence="15" ref="1">
    <original>K</original>
    <variation>N</variation>
    <location>
        <position position="414"/>
    </location>
</feature>
<feature type="sequence conflict" description="In Ref. 1; AAO85540." evidence="15" ref="1">
    <original>M</original>
    <variation>I</variation>
    <location>
        <position position="449"/>
    </location>
</feature>
<feature type="sequence conflict" description="In Ref. 1; AAO85540." evidence="15" ref="1">
    <original>T</original>
    <variation>C</variation>
    <location>
        <position position="532"/>
    </location>
</feature>
<feature type="sequence conflict" description="In Ref. 1; AAO85540." evidence="15" ref="1">
    <original>G</original>
    <variation>A</variation>
    <location>
        <position position="554"/>
    </location>
</feature>
<feature type="sequence conflict" description="In Ref. 1; AAO85540." evidence="15" ref="1">
    <original>N</original>
    <variation>K</variation>
    <location>
        <position position="572"/>
    </location>
</feature>
<feature type="sequence conflict" description="In Ref. 1; AAO85540." evidence="15" ref="1">
    <original>M</original>
    <variation>I</variation>
    <location>
        <position position="694"/>
    </location>
</feature>
<feature type="sequence conflict" description="In Ref. 1; AAO85540." evidence="15" ref="1">
    <original>M</original>
    <variation>T</variation>
    <location>
        <position position="748"/>
    </location>
</feature>
<dbReference type="EC" id="4.2.3.144" evidence="5 7"/>
<dbReference type="EMBL" id="AF497492">
    <property type="protein sequence ID" value="AAO85540.1"/>
    <property type="molecule type" value="mRNA"/>
</dbReference>
<dbReference type="EMBL" id="AC002294">
    <property type="protein sequence ID" value="AAB71482.1"/>
    <property type="status" value="ALT_SEQ"/>
    <property type="molecule type" value="Genomic_DNA"/>
</dbReference>
<dbReference type="EMBL" id="CP002684">
    <property type="protein sequence ID" value="AEE33784.1"/>
    <property type="molecule type" value="Genomic_DNA"/>
</dbReference>
<dbReference type="EMBL" id="AY059757">
    <property type="protein sequence ID" value="AAL24105.1"/>
    <property type="molecule type" value="mRNA"/>
</dbReference>
<dbReference type="EMBL" id="BT001960">
    <property type="protein sequence ID" value="AAN71959.1"/>
    <property type="molecule type" value="mRNA"/>
</dbReference>
<dbReference type="PIR" id="A96637">
    <property type="entry name" value="A96637"/>
</dbReference>
<dbReference type="RefSeq" id="NP_564772.1">
    <property type="nucleotide sequence ID" value="NM_104793.3"/>
</dbReference>
<dbReference type="SMR" id="Q93YV0"/>
<dbReference type="FunCoup" id="Q93YV0">
    <property type="interactions" value="28"/>
</dbReference>
<dbReference type="STRING" id="3702.Q93YV0"/>
<dbReference type="PaxDb" id="3702-AT1G61120.1"/>
<dbReference type="ProteomicsDB" id="220733"/>
<dbReference type="EnsemblPlants" id="AT1G61120.1">
    <property type="protein sequence ID" value="AT1G61120.1"/>
    <property type="gene ID" value="AT1G61120"/>
</dbReference>
<dbReference type="GeneID" id="842405"/>
<dbReference type="Gramene" id="AT1G61120.1">
    <property type="protein sequence ID" value="AT1G61120.1"/>
    <property type="gene ID" value="AT1G61120"/>
</dbReference>
<dbReference type="KEGG" id="ath:AT1G61120"/>
<dbReference type="Araport" id="AT1G61120"/>
<dbReference type="TAIR" id="AT1G61120">
    <property type="gene designation" value="TPS04"/>
</dbReference>
<dbReference type="eggNOG" id="ENOG502REU3">
    <property type="taxonomic scope" value="Eukaryota"/>
</dbReference>
<dbReference type="HOGENOM" id="CLU_003125_2_0_1"/>
<dbReference type="InParanoid" id="Q93YV0"/>
<dbReference type="OMA" id="MRAIYIP"/>
<dbReference type="PhylomeDB" id="Q93YV0"/>
<dbReference type="BioCyc" id="ARA:AT1G61120-MONOMER"/>
<dbReference type="BioCyc" id="MetaCyc:AT1G61120-MONOMER"/>
<dbReference type="BRENDA" id="4.2.3.144">
    <property type="organism ID" value="399"/>
</dbReference>
<dbReference type="UniPathway" id="UPA00213"/>
<dbReference type="PRO" id="PR:Q93YV0"/>
<dbReference type="Proteomes" id="UP000006548">
    <property type="component" value="Chromosome 1"/>
</dbReference>
<dbReference type="ExpressionAtlas" id="Q93YV0">
    <property type="expression patterns" value="baseline and differential"/>
</dbReference>
<dbReference type="GO" id="GO:0005737">
    <property type="term" value="C:cytoplasm"/>
    <property type="evidence" value="ECO:0007669"/>
    <property type="project" value="UniProtKB-SubCell"/>
</dbReference>
<dbReference type="GO" id="GO:0080013">
    <property type="term" value="F:(E,E)-geranyllinalool synthase activity"/>
    <property type="evidence" value="ECO:0000314"/>
    <property type="project" value="TAIR"/>
</dbReference>
<dbReference type="GO" id="GO:0000287">
    <property type="term" value="F:magnesium ion binding"/>
    <property type="evidence" value="ECO:0007669"/>
    <property type="project" value="InterPro"/>
</dbReference>
<dbReference type="GO" id="GO:0010333">
    <property type="term" value="F:terpene synthase activity"/>
    <property type="evidence" value="ECO:0007669"/>
    <property type="project" value="InterPro"/>
</dbReference>
<dbReference type="GO" id="GO:0016102">
    <property type="term" value="P:diterpenoid biosynthetic process"/>
    <property type="evidence" value="ECO:0000314"/>
    <property type="project" value="TAIR"/>
</dbReference>
<dbReference type="GO" id="GO:0009617">
    <property type="term" value="P:response to bacterium"/>
    <property type="evidence" value="ECO:0000270"/>
    <property type="project" value="UniProtKB"/>
</dbReference>
<dbReference type="GO" id="GO:0080027">
    <property type="term" value="P:response to herbivore"/>
    <property type="evidence" value="ECO:0000270"/>
    <property type="project" value="UniProtKB"/>
</dbReference>
<dbReference type="GO" id="GO:0009753">
    <property type="term" value="P:response to jasmonic acid"/>
    <property type="evidence" value="ECO:0000316"/>
    <property type="project" value="TAIR"/>
</dbReference>
<dbReference type="GO" id="GO:0000304">
    <property type="term" value="P:response to singlet oxygen"/>
    <property type="evidence" value="ECO:0000270"/>
    <property type="project" value="TAIR"/>
</dbReference>
<dbReference type="GO" id="GO:0009611">
    <property type="term" value="P:response to wounding"/>
    <property type="evidence" value="ECO:0000270"/>
    <property type="project" value="TAIR"/>
</dbReference>
<dbReference type="FunFam" id="1.10.600.10:FF:000036">
    <property type="entry name" value="cis-abienol synthase, chloroplastic"/>
    <property type="match status" value="1"/>
</dbReference>
<dbReference type="FunFam" id="1.50.10.130:FF:000002">
    <property type="entry name" value="Ent-copalyl diphosphate synthase, chloroplastic"/>
    <property type="match status" value="1"/>
</dbReference>
<dbReference type="Gene3D" id="1.50.10.160">
    <property type="match status" value="1"/>
</dbReference>
<dbReference type="Gene3D" id="1.10.600.10">
    <property type="entry name" value="Farnesyl Diphosphate Synthase"/>
    <property type="match status" value="1"/>
</dbReference>
<dbReference type="Gene3D" id="1.50.10.130">
    <property type="entry name" value="Terpene synthase, N-terminal domain"/>
    <property type="match status" value="1"/>
</dbReference>
<dbReference type="InterPro" id="IPR008949">
    <property type="entry name" value="Isoprenoid_synthase_dom_sf"/>
</dbReference>
<dbReference type="InterPro" id="IPR001906">
    <property type="entry name" value="Terpene_synth_N"/>
</dbReference>
<dbReference type="InterPro" id="IPR036965">
    <property type="entry name" value="Terpene_synth_N_sf"/>
</dbReference>
<dbReference type="InterPro" id="IPR050148">
    <property type="entry name" value="Terpene_synthase-like"/>
</dbReference>
<dbReference type="InterPro" id="IPR005630">
    <property type="entry name" value="Terpene_synthase_metal-bd"/>
</dbReference>
<dbReference type="InterPro" id="IPR008930">
    <property type="entry name" value="Terpenoid_cyclase/PrenylTrfase"/>
</dbReference>
<dbReference type="PANTHER" id="PTHR31739:SF25">
    <property type="entry name" value="(E,E)-GERANYLLINALOOL SYNTHASE"/>
    <property type="match status" value="1"/>
</dbReference>
<dbReference type="PANTHER" id="PTHR31739">
    <property type="entry name" value="ENT-COPALYL DIPHOSPHATE SYNTHASE, CHLOROPLASTIC"/>
    <property type="match status" value="1"/>
</dbReference>
<dbReference type="Pfam" id="PF01397">
    <property type="entry name" value="Terpene_synth"/>
    <property type="match status" value="1"/>
</dbReference>
<dbReference type="Pfam" id="PF03936">
    <property type="entry name" value="Terpene_synth_C"/>
    <property type="match status" value="1"/>
</dbReference>
<dbReference type="SFLD" id="SFLDG01014">
    <property type="entry name" value="Terpene_Cyclase_Like_1_N-term"/>
    <property type="match status" value="1"/>
</dbReference>
<dbReference type="SUPFAM" id="SSF48239">
    <property type="entry name" value="Terpenoid cyclases/Protein prenyltransferases"/>
    <property type="match status" value="2"/>
</dbReference>
<dbReference type="SUPFAM" id="SSF48576">
    <property type="entry name" value="Terpenoid synthases"/>
    <property type="match status" value="1"/>
</dbReference>